<proteinExistence type="evidence at protein level"/>
<keyword id="KW-0597">Phosphoprotein</keyword>
<keyword id="KW-1185">Reference proteome</keyword>
<comment type="function">
    <text>The N-terminal domain binds to adenylyl cyclase, thereby enabling adenylyl cyclase to be activated by upstream regulatory signals, such as Ras. The C-terminal domain is required for normal cellular morphology and growth control.</text>
</comment>
<comment type="similarity">
    <text evidence="4">Belongs to the CAP family.</text>
</comment>
<evidence type="ECO:0000255" key="1">
    <source>
        <dbReference type="PROSITE-ProRule" id="PRU00659"/>
    </source>
</evidence>
<evidence type="ECO:0000256" key="2">
    <source>
        <dbReference type="SAM" id="MobiDB-lite"/>
    </source>
</evidence>
<evidence type="ECO:0000269" key="3">
    <source>
    </source>
</evidence>
<evidence type="ECO:0000305" key="4"/>
<gene>
    <name type="primary">cap1</name>
    <name type="synonym">cap</name>
    <name type="ORF">SPCC306.09c</name>
</gene>
<sequence length="551" mass="60243">MSDMINIRETGYNFTTILKRLEAATSRLEDLVESGHKPLPNMHRPSRDSNSQTHNISFNIGTPTAPTVSTGSPAVASLHDQVAAAISPRNRSLTSTSAVEAVPASISAYDEFCSKYLSKYMELSKKIGGLIAEQSEHVEKAFNLLRQVLSVALKAQKPDMDSPELLEFLKPIQSELLTITNIRDEHRTAPEFNQLSTVMSGISILGWVTVEPTPLSFMSEMKDSSQFYANRVMKEFKGKDDLQIEWVRSYLTLLTELITYVKTHFKTGLTWSTKQDAVPLKTALANLSASKTQAPSSGDSANGGLPPPPPPPPPSNDFWKDSNEPAPADNKGDMGAVFAEINKGEGITSGLRKVDKSEMTHKNPNLRKTGPTPGPKPKIKSSAPSKPAETAPVKPPRIELENTKWFVENQVDNHSIVLDSVELNHSVQIFGCSNCTIIIKGKLNTVSMSNCKRTSVVVDTLVAAFDIAKCSNFGCQVMNHVPMIVIDQCDGGSIYLSKSSLSSEVVTSKSTSLNINVPNEEGDYAERAVPEQIKHKVNEKGELVSEIVRHE</sequence>
<organism>
    <name type="scientific">Schizosaccharomyces pombe (strain 972 / ATCC 24843)</name>
    <name type="common">Fission yeast</name>
    <dbReference type="NCBI Taxonomy" id="284812"/>
    <lineage>
        <taxon>Eukaryota</taxon>
        <taxon>Fungi</taxon>
        <taxon>Dikarya</taxon>
        <taxon>Ascomycota</taxon>
        <taxon>Taphrinomycotina</taxon>
        <taxon>Schizosaccharomycetes</taxon>
        <taxon>Schizosaccharomycetales</taxon>
        <taxon>Schizosaccharomycetaceae</taxon>
        <taxon>Schizosaccharomyces</taxon>
    </lineage>
</organism>
<accession>P36621</accession>
<feature type="chain" id="PRO_0000205705" description="Adenylyl cyclase-associated protein">
    <location>
        <begin position="1"/>
        <end position="551"/>
    </location>
</feature>
<feature type="domain" description="C-CAP/cofactor C-like" evidence="1">
    <location>
        <begin position="395"/>
        <end position="529"/>
    </location>
</feature>
<feature type="region of interest" description="Disordered" evidence="2">
    <location>
        <begin position="34"/>
        <end position="55"/>
    </location>
</feature>
<feature type="region of interest" description="Disordered" evidence="2">
    <location>
        <begin position="288"/>
        <end position="333"/>
    </location>
</feature>
<feature type="region of interest" description="Disordered" evidence="2">
    <location>
        <begin position="348"/>
        <end position="395"/>
    </location>
</feature>
<feature type="compositionally biased region" description="Polar residues" evidence="2">
    <location>
        <begin position="288"/>
        <end position="300"/>
    </location>
</feature>
<feature type="compositionally biased region" description="Pro residues" evidence="2">
    <location>
        <begin position="305"/>
        <end position="315"/>
    </location>
</feature>
<feature type="compositionally biased region" description="Basic and acidic residues" evidence="2">
    <location>
        <begin position="352"/>
        <end position="361"/>
    </location>
</feature>
<feature type="modified residue" description="Phosphoserine" evidence="3">
    <location>
        <position position="92"/>
    </location>
</feature>
<feature type="modified residue" description="Phosphothreonine" evidence="3">
    <location>
        <position position="96"/>
    </location>
</feature>
<dbReference type="EMBL" id="L16577">
    <property type="protein sequence ID" value="AAA35292.1"/>
    <property type="molecule type" value="mRNA"/>
</dbReference>
<dbReference type="EMBL" id="CU329672">
    <property type="protein sequence ID" value="CAB41657.1"/>
    <property type="molecule type" value="Genomic_DNA"/>
</dbReference>
<dbReference type="PIR" id="A60047">
    <property type="entry name" value="A60047"/>
</dbReference>
<dbReference type="RefSeq" id="NP_587817.1">
    <property type="nucleotide sequence ID" value="NM_001022810.2"/>
</dbReference>
<dbReference type="SMR" id="P36621"/>
<dbReference type="BioGRID" id="275410">
    <property type="interactions" value="11"/>
</dbReference>
<dbReference type="FunCoup" id="P36621">
    <property type="interactions" value="408"/>
</dbReference>
<dbReference type="STRING" id="284812.P36621"/>
<dbReference type="iPTMnet" id="P36621"/>
<dbReference type="PaxDb" id="4896-SPCC306.09c.1"/>
<dbReference type="EnsemblFungi" id="SPCC306.09c.1">
    <property type="protein sequence ID" value="SPCC306.09c.1:pep"/>
    <property type="gene ID" value="SPCC306.09c"/>
</dbReference>
<dbReference type="GeneID" id="2538829"/>
<dbReference type="KEGG" id="spo:2538829"/>
<dbReference type="PomBase" id="SPCC306.09c">
    <property type="gene designation" value="cap1"/>
</dbReference>
<dbReference type="VEuPathDB" id="FungiDB:SPCC306.09c"/>
<dbReference type="eggNOG" id="KOG2675">
    <property type="taxonomic scope" value="Eukaryota"/>
</dbReference>
<dbReference type="HOGENOM" id="CLU_015780_1_0_1"/>
<dbReference type="InParanoid" id="P36621"/>
<dbReference type="OMA" id="KSQQTHK"/>
<dbReference type="PhylomeDB" id="P36621"/>
<dbReference type="Reactome" id="R-SPO-6798695">
    <property type="pathway name" value="Neutrophil degranulation"/>
</dbReference>
<dbReference type="PRO" id="PR:P36621"/>
<dbReference type="Proteomes" id="UP000002485">
    <property type="component" value="Chromosome III"/>
</dbReference>
<dbReference type="GO" id="GO:0030428">
    <property type="term" value="C:cell septum"/>
    <property type="evidence" value="ECO:0000314"/>
    <property type="project" value="CACAO"/>
</dbReference>
<dbReference type="GO" id="GO:0005737">
    <property type="term" value="C:cytoplasm"/>
    <property type="evidence" value="ECO:0007005"/>
    <property type="project" value="PomBase"/>
</dbReference>
<dbReference type="GO" id="GO:0000935">
    <property type="term" value="C:division septum"/>
    <property type="evidence" value="ECO:0000314"/>
    <property type="project" value="PomBase"/>
</dbReference>
<dbReference type="GO" id="GO:0035838">
    <property type="term" value="C:growing cell tip"/>
    <property type="evidence" value="ECO:0000314"/>
    <property type="project" value="PomBase"/>
</dbReference>
<dbReference type="GO" id="GO:0003779">
    <property type="term" value="F:actin binding"/>
    <property type="evidence" value="ECO:0000318"/>
    <property type="project" value="GO_Central"/>
</dbReference>
<dbReference type="GO" id="GO:0008179">
    <property type="term" value="F:adenylate cyclase binding"/>
    <property type="evidence" value="ECO:0000318"/>
    <property type="project" value="GO_Central"/>
</dbReference>
<dbReference type="GO" id="GO:0007015">
    <property type="term" value="P:actin filament organization"/>
    <property type="evidence" value="ECO:0000315"/>
    <property type="project" value="CACAO"/>
</dbReference>
<dbReference type="GO" id="GO:0010619">
    <property type="term" value="P:adenylate cyclase-activating glucose-activated G protein-coupled receptor signaling pathway"/>
    <property type="evidence" value="ECO:0000315"/>
    <property type="project" value="PomBase"/>
</dbReference>
<dbReference type="GO" id="GO:0019933">
    <property type="term" value="P:cAMP-mediated signaling"/>
    <property type="evidence" value="ECO:0000318"/>
    <property type="project" value="GO_Central"/>
</dbReference>
<dbReference type="GO" id="GO:0030308">
    <property type="term" value="P:negative regulation of cell growth"/>
    <property type="evidence" value="ECO:0000316"/>
    <property type="project" value="CACAO"/>
</dbReference>
<dbReference type="GO" id="GO:0031138">
    <property type="term" value="P:negative regulation of conjugation with cellular fusion"/>
    <property type="evidence" value="ECO:0000315"/>
    <property type="project" value="PomBase"/>
</dbReference>
<dbReference type="FunFam" id="1.25.40.330:FF:000001">
    <property type="entry name" value="Adenylyl cyclase-associated protein"/>
    <property type="match status" value="1"/>
</dbReference>
<dbReference type="Gene3D" id="2.160.20.70">
    <property type="match status" value="1"/>
</dbReference>
<dbReference type="Gene3D" id="1.25.40.330">
    <property type="entry name" value="Adenylate cyclase-associated CAP, N-terminal domain"/>
    <property type="match status" value="1"/>
</dbReference>
<dbReference type="InterPro" id="IPR001837">
    <property type="entry name" value="Adenylate_cyclase-assoc_CAP"/>
</dbReference>
<dbReference type="InterPro" id="IPR013912">
    <property type="entry name" value="Adenylate_cyclase-assoc_CAP_C"/>
</dbReference>
<dbReference type="InterPro" id="IPR013992">
    <property type="entry name" value="Adenylate_cyclase-assoc_CAP_N"/>
</dbReference>
<dbReference type="InterPro" id="IPR017901">
    <property type="entry name" value="C-CAP_CF_C-like"/>
</dbReference>
<dbReference type="InterPro" id="IPR016098">
    <property type="entry name" value="CAP/MinC_C"/>
</dbReference>
<dbReference type="InterPro" id="IPR036223">
    <property type="entry name" value="CAP_C_sf"/>
</dbReference>
<dbReference type="InterPro" id="IPR028417">
    <property type="entry name" value="CAP_CS_C"/>
</dbReference>
<dbReference type="InterPro" id="IPR018106">
    <property type="entry name" value="CAP_CS_N"/>
</dbReference>
<dbReference type="InterPro" id="IPR053950">
    <property type="entry name" value="CAP_N"/>
</dbReference>
<dbReference type="InterPro" id="IPR036222">
    <property type="entry name" value="CAP_N_sf"/>
</dbReference>
<dbReference type="InterPro" id="IPR006599">
    <property type="entry name" value="CARP_motif"/>
</dbReference>
<dbReference type="PANTHER" id="PTHR10652">
    <property type="entry name" value="ADENYLYL CYCLASE-ASSOCIATED PROTEIN"/>
    <property type="match status" value="1"/>
</dbReference>
<dbReference type="PANTHER" id="PTHR10652:SF0">
    <property type="entry name" value="ADENYLYL CYCLASE-ASSOCIATED PROTEIN"/>
    <property type="match status" value="1"/>
</dbReference>
<dbReference type="Pfam" id="PF08603">
    <property type="entry name" value="CAP_C"/>
    <property type="match status" value="1"/>
</dbReference>
<dbReference type="Pfam" id="PF21938">
    <property type="entry name" value="CAP_N"/>
    <property type="match status" value="1"/>
</dbReference>
<dbReference type="Pfam" id="PF01213">
    <property type="entry name" value="CAP_N-CM"/>
    <property type="match status" value="1"/>
</dbReference>
<dbReference type="SMART" id="SM00673">
    <property type="entry name" value="CARP"/>
    <property type="match status" value="2"/>
</dbReference>
<dbReference type="SUPFAM" id="SSF69340">
    <property type="entry name" value="C-terminal domain of adenylylcyclase associated protein"/>
    <property type="match status" value="1"/>
</dbReference>
<dbReference type="SUPFAM" id="SSF101278">
    <property type="entry name" value="N-terminal domain of adenylylcyclase associated protein, CAP"/>
    <property type="match status" value="1"/>
</dbReference>
<dbReference type="PROSITE" id="PS51329">
    <property type="entry name" value="C_CAP_COFACTOR_C"/>
    <property type="match status" value="1"/>
</dbReference>
<dbReference type="PROSITE" id="PS01088">
    <property type="entry name" value="CAP_1"/>
    <property type="match status" value="1"/>
</dbReference>
<dbReference type="PROSITE" id="PS01089">
    <property type="entry name" value="CAP_2"/>
    <property type="match status" value="1"/>
</dbReference>
<reference key="1">
    <citation type="journal article" date="1992" name="Mol. Biol. Cell">
        <title>Genetic and biochemical analysis of the adenylyl cyclase-associated protein, cap, in Schizosaccharomyces pombe.</title>
        <authorList>
            <person name="Kawamukai M."/>
            <person name="Gerst J."/>
            <person name="Field J."/>
            <person name="Riggs M."/>
            <person name="Rodgers L."/>
            <person name="Wigler M."/>
            <person name="Young D."/>
        </authorList>
    </citation>
    <scope>NUCLEOTIDE SEQUENCE [MRNA]</scope>
    <source>
        <strain>MK141</strain>
    </source>
</reference>
<reference key="2">
    <citation type="journal article" date="2002" name="Nature">
        <title>The genome sequence of Schizosaccharomyces pombe.</title>
        <authorList>
            <person name="Wood V."/>
            <person name="Gwilliam R."/>
            <person name="Rajandream M.A."/>
            <person name="Lyne M.H."/>
            <person name="Lyne R."/>
            <person name="Stewart A."/>
            <person name="Sgouros J.G."/>
            <person name="Peat N."/>
            <person name="Hayles J."/>
            <person name="Baker S.G."/>
            <person name="Basham D."/>
            <person name="Bowman S."/>
            <person name="Brooks K."/>
            <person name="Brown D."/>
            <person name="Brown S."/>
            <person name="Chillingworth T."/>
            <person name="Churcher C.M."/>
            <person name="Collins M."/>
            <person name="Connor R."/>
            <person name="Cronin A."/>
            <person name="Davis P."/>
            <person name="Feltwell T."/>
            <person name="Fraser A."/>
            <person name="Gentles S."/>
            <person name="Goble A."/>
            <person name="Hamlin N."/>
            <person name="Harris D.E."/>
            <person name="Hidalgo J."/>
            <person name="Hodgson G."/>
            <person name="Holroyd S."/>
            <person name="Hornsby T."/>
            <person name="Howarth S."/>
            <person name="Huckle E.J."/>
            <person name="Hunt S."/>
            <person name="Jagels K."/>
            <person name="James K.D."/>
            <person name="Jones L."/>
            <person name="Jones M."/>
            <person name="Leather S."/>
            <person name="McDonald S."/>
            <person name="McLean J."/>
            <person name="Mooney P."/>
            <person name="Moule S."/>
            <person name="Mungall K.L."/>
            <person name="Murphy L.D."/>
            <person name="Niblett D."/>
            <person name="Odell C."/>
            <person name="Oliver K."/>
            <person name="O'Neil S."/>
            <person name="Pearson D."/>
            <person name="Quail M.A."/>
            <person name="Rabbinowitsch E."/>
            <person name="Rutherford K.M."/>
            <person name="Rutter S."/>
            <person name="Saunders D."/>
            <person name="Seeger K."/>
            <person name="Sharp S."/>
            <person name="Skelton J."/>
            <person name="Simmonds M.N."/>
            <person name="Squares R."/>
            <person name="Squares S."/>
            <person name="Stevens K."/>
            <person name="Taylor K."/>
            <person name="Taylor R.G."/>
            <person name="Tivey A."/>
            <person name="Walsh S.V."/>
            <person name="Warren T."/>
            <person name="Whitehead S."/>
            <person name="Woodward J.R."/>
            <person name="Volckaert G."/>
            <person name="Aert R."/>
            <person name="Robben J."/>
            <person name="Grymonprez B."/>
            <person name="Weltjens I."/>
            <person name="Vanstreels E."/>
            <person name="Rieger M."/>
            <person name="Schaefer M."/>
            <person name="Mueller-Auer S."/>
            <person name="Gabel C."/>
            <person name="Fuchs M."/>
            <person name="Duesterhoeft A."/>
            <person name="Fritzc C."/>
            <person name="Holzer E."/>
            <person name="Moestl D."/>
            <person name="Hilbert H."/>
            <person name="Borzym K."/>
            <person name="Langer I."/>
            <person name="Beck A."/>
            <person name="Lehrach H."/>
            <person name="Reinhardt R."/>
            <person name="Pohl T.M."/>
            <person name="Eger P."/>
            <person name="Zimmermann W."/>
            <person name="Wedler H."/>
            <person name="Wambutt R."/>
            <person name="Purnelle B."/>
            <person name="Goffeau A."/>
            <person name="Cadieu E."/>
            <person name="Dreano S."/>
            <person name="Gloux S."/>
            <person name="Lelaure V."/>
            <person name="Mottier S."/>
            <person name="Galibert F."/>
            <person name="Aves S.J."/>
            <person name="Xiang Z."/>
            <person name="Hunt C."/>
            <person name="Moore K."/>
            <person name="Hurst S.M."/>
            <person name="Lucas M."/>
            <person name="Rochet M."/>
            <person name="Gaillardin C."/>
            <person name="Tallada V.A."/>
            <person name="Garzon A."/>
            <person name="Thode G."/>
            <person name="Daga R.R."/>
            <person name="Cruzado L."/>
            <person name="Jimenez J."/>
            <person name="Sanchez M."/>
            <person name="del Rey F."/>
            <person name="Benito J."/>
            <person name="Dominguez A."/>
            <person name="Revuelta J.L."/>
            <person name="Moreno S."/>
            <person name="Armstrong J."/>
            <person name="Forsburg S.L."/>
            <person name="Cerutti L."/>
            <person name="Lowe T."/>
            <person name="McCombie W.R."/>
            <person name="Paulsen I."/>
            <person name="Potashkin J."/>
            <person name="Shpakovski G.V."/>
            <person name="Ussery D."/>
            <person name="Barrell B.G."/>
            <person name="Nurse P."/>
        </authorList>
    </citation>
    <scope>NUCLEOTIDE SEQUENCE [LARGE SCALE GENOMIC DNA]</scope>
    <source>
        <strain>972 / ATCC 24843</strain>
    </source>
</reference>
<reference key="3">
    <citation type="journal article" date="2008" name="J. Proteome Res.">
        <title>Phosphoproteome analysis of fission yeast.</title>
        <authorList>
            <person name="Wilson-Grady J.T."/>
            <person name="Villen J."/>
            <person name="Gygi S.P."/>
        </authorList>
    </citation>
    <scope>PHOSPHORYLATION [LARGE SCALE ANALYSIS] AT SER-92 AND THR-96</scope>
    <scope>IDENTIFICATION BY MASS SPECTROMETRY</scope>
</reference>
<name>CAP_SCHPO</name>
<protein>
    <recommendedName>
        <fullName>Adenylyl cyclase-associated protein</fullName>
        <shortName>CAP</shortName>
    </recommendedName>
</protein>